<dbReference type="EC" id="3.6.1.27" evidence="1"/>
<dbReference type="EMBL" id="CP000774">
    <property type="protein sequence ID" value="ABS62741.1"/>
    <property type="molecule type" value="Genomic_DNA"/>
</dbReference>
<dbReference type="RefSeq" id="WP_012110000.1">
    <property type="nucleotide sequence ID" value="NC_009719.1"/>
</dbReference>
<dbReference type="SMR" id="A7HS58"/>
<dbReference type="STRING" id="402881.Plav_1120"/>
<dbReference type="KEGG" id="pla:Plav_1120"/>
<dbReference type="eggNOG" id="COG1968">
    <property type="taxonomic scope" value="Bacteria"/>
</dbReference>
<dbReference type="HOGENOM" id="CLU_060296_2_0_5"/>
<dbReference type="OrthoDB" id="9808289at2"/>
<dbReference type="Proteomes" id="UP000006377">
    <property type="component" value="Chromosome"/>
</dbReference>
<dbReference type="GO" id="GO:0005886">
    <property type="term" value="C:plasma membrane"/>
    <property type="evidence" value="ECO:0007669"/>
    <property type="project" value="UniProtKB-SubCell"/>
</dbReference>
<dbReference type="GO" id="GO:0050380">
    <property type="term" value="F:undecaprenyl-diphosphatase activity"/>
    <property type="evidence" value="ECO:0007669"/>
    <property type="project" value="UniProtKB-UniRule"/>
</dbReference>
<dbReference type="GO" id="GO:0071555">
    <property type="term" value="P:cell wall organization"/>
    <property type="evidence" value="ECO:0007669"/>
    <property type="project" value="UniProtKB-KW"/>
</dbReference>
<dbReference type="GO" id="GO:0009252">
    <property type="term" value="P:peptidoglycan biosynthetic process"/>
    <property type="evidence" value="ECO:0007669"/>
    <property type="project" value="UniProtKB-KW"/>
</dbReference>
<dbReference type="GO" id="GO:0008360">
    <property type="term" value="P:regulation of cell shape"/>
    <property type="evidence" value="ECO:0007669"/>
    <property type="project" value="UniProtKB-KW"/>
</dbReference>
<dbReference type="GO" id="GO:0046677">
    <property type="term" value="P:response to antibiotic"/>
    <property type="evidence" value="ECO:0007669"/>
    <property type="project" value="UniProtKB-UniRule"/>
</dbReference>
<dbReference type="HAMAP" id="MF_01006">
    <property type="entry name" value="Undec_diphosphatase"/>
    <property type="match status" value="1"/>
</dbReference>
<dbReference type="InterPro" id="IPR003824">
    <property type="entry name" value="UppP"/>
</dbReference>
<dbReference type="NCBIfam" id="NF001389">
    <property type="entry name" value="PRK00281.1-2"/>
    <property type="match status" value="1"/>
</dbReference>
<dbReference type="NCBIfam" id="NF001390">
    <property type="entry name" value="PRK00281.1-4"/>
    <property type="match status" value="1"/>
</dbReference>
<dbReference type="NCBIfam" id="TIGR00753">
    <property type="entry name" value="undec_PP_bacA"/>
    <property type="match status" value="1"/>
</dbReference>
<dbReference type="PANTHER" id="PTHR30622">
    <property type="entry name" value="UNDECAPRENYL-DIPHOSPHATASE"/>
    <property type="match status" value="1"/>
</dbReference>
<dbReference type="PANTHER" id="PTHR30622:SF3">
    <property type="entry name" value="UNDECAPRENYL-DIPHOSPHATASE"/>
    <property type="match status" value="1"/>
</dbReference>
<dbReference type="Pfam" id="PF02673">
    <property type="entry name" value="BacA"/>
    <property type="match status" value="1"/>
</dbReference>
<feature type="chain" id="PRO_1000072894" description="Undecaprenyl-diphosphatase">
    <location>
        <begin position="1"/>
        <end position="268"/>
    </location>
</feature>
<feature type="transmembrane region" description="Helical" evidence="1">
    <location>
        <begin position="42"/>
        <end position="62"/>
    </location>
</feature>
<feature type="transmembrane region" description="Helical" evidence="1">
    <location>
        <begin position="86"/>
        <end position="106"/>
    </location>
</feature>
<feature type="transmembrane region" description="Helical" evidence="1">
    <location>
        <begin position="108"/>
        <end position="128"/>
    </location>
</feature>
<feature type="transmembrane region" description="Helical" evidence="1">
    <location>
        <begin position="158"/>
        <end position="178"/>
    </location>
</feature>
<feature type="transmembrane region" description="Helical" evidence="1">
    <location>
        <begin position="184"/>
        <end position="204"/>
    </location>
</feature>
<feature type="transmembrane region" description="Helical" evidence="1">
    <location>
        <begin position="218"/>
        <end position="238"/>
    </location>
</feature>
<feature type="transmembrane region" description="Helical" evidence="1">
    <location>
        <begin position="246"/>
        <end position="266"/>
    </location>
</feature>
<keyword id="KW-0046">Antibiotic resistance</keyword>
<keyword id="KW-0997">Cell inner membrane</keyword>
<keyword id="KW-1003">Cell membrane</keyword>
<keyword id="KW-0133">Cell shape</keyword>
<keyword id="KW-0961">Cell wall biogenesis/degradation</keyword>
<keyword id="KW-0378">Hydrolase</keyword>
<keyword id="KW-0472">Membrane</keyword>
<keyword id="KW-0573">Peptidoglycan synthesis</keyword>
<keyword id="KW-1185">Reference proteome</keyword>
<keyword id="KW-0812">Transmembrane</keyword>
<keyword id="KW-1133">Transmembrane helix</keyword>
<protein>
    <recommendedName>
        <fullName evidence="1">Undecaprenyl-diphosphatase</fullName>
        <ecNumber evidence="1">3.6.1.27</ecNumber>
    </recommendedName>
    <alternativeName>
        <fullName evidence="1">Bacitracin resistance protein</fullName>
    </alternativeName>
    <alternativeName>
        <fullName evidence="1">Undecaprenyl pyrophosphate phosphatase</fullName>
    </alternativeName>
</protein>
<gene>
    <name evidence="1" type="primary">uppP</name>
    <name type="ordered locus">Plav_1120</name>
</gene>
<sequence>MNDPNFLHAIILGIVEGVSEFLPISSTGHLIIVGELLGFSSVPGKVFEVVIQLGAILAICVLYSGRLTRVLRDAPRDAGARNFIGAIFVALIPAGLLGVLYHDFILEVLFTPYVVCAALITGGIAIVVVERLHLEPRITSVEAFSMRTALKIGLFQCIALVPGVSRSGATILGALLVGVERKTAAEFSFFLAIPVMLGASVVSLRDTWQLISMDDLHLIAAGFIAAFISALLVVKWLVSFVSSHGFTVFGWYRILFGSLLLIYFSLSS</sequence>
<comment type="function">
    <text evidence="1">Catalyzes the dephosphorylation of undecaprenyl diphosphate (UPP). Confers resistance to bacitracin.</text>
</comment>
<comment type="catalytic activity">
    <reaction evidence="1">
        <text>di-trans,octa-cis-undecaprenyl diphosphate + H2O = di-trans,octa-cis-undecaprenyl phosphate + phosphate + H(+)</text>
        <dbReference type="Rhea" id="RHEA:28094"/>
        <dbReference type="ChEBI" id="CHEBI:15377"/>
        <dbReference type="ChEBI" id="CHEBI:15378"/>
        <dbReference type="ChEBI" id="CHEBI:43474"/>
        <dbReference type="ChEBI" id="CHEBI:58405"/>
        <dbReference type="ChEBI" id="CHEBI:60392"/>
        <dbReference type="EC" id="3.6.1.27"/>
    </reaction>
</comment>
<comment type="subcellular location">
    <subcellularLocation>
        <location evidence="1">Cell inner membrane</location>
        <topology evidence="1">Multi-pass membrane protein</topology>
    </subcellularLocation>
</comment>
<comment type="miscellaneous">
    <text>Bacitracin is thought to be involved in the inhibition of peptidoglycan synthesis by sequestering undecaprenyl diphosphate, thereby reducing the pool of lipid carrier available.</text>
</comment>
<comment type="similarity">
    <text evidence="1">Belongs to the UppP family.</text>
</comment>
<name>UPPP_PARL1</name>
<proteinExistence type="inferred from homology"/>
<accession>A7HS58</accession>
<organism>
    <name type="scientific">Parvibaculum lavamentivorans (strain DS-1 / DSM 13023 / NCIMB 13966)</name>
    <dbReference type="NCBI Taxonomy" id="402881"/>
    <lineage>
        <taxon>Bacteria</taxon>
        <taxon>Pseudomonadati</taxon>
        <taxon>Pseudomonadota</taxon>
        <taxon>Alphaproteobacteria</taxon>
        <taxon>Hyphomicrobiales</taxon>
        <taxon>Parvibaculaceae</taxon>
        <taxon>Parvibaculum</taxon>
    </lineage>
</organism>
<evidence type="ECO:0000255" key="1">
    <source>
        <dbReference type="HAMAP-Rule" id="MF_01006"/>
    </source>
</evidence>
<reference key="1">
    <citation type="journal article" date="2011" name="Stand. Genomic Sci.">
        <title>Complete genome sequence of Parvibaculum lavamentivorans type strain (DS-1(T)).</title>
        <authorList>
            <person name="Schleheck D."/>
            <person name="Weiss M."/>
            <person name="Pitluck S."/>
            <person name="Bruce D."/>
            <person name="Land M.L."/>
            <person name="Han S."/>
            <person name="Saunders E."/>
            <person name="Tapia R."/>
            <person name="Detter C."/>
            <person name="Brettin T."/>
            <person name="Han J."/>
            <person name="Woyke T."/>
            <person name="Goodwin L."/>
            <person name="Pennacchio L."/>
            <person name="Nolan M."/>
            <person name="Cook A.M."/>
            <person name="Kjelleberg S."/>
            <person name="Thomas T."/>
        </authorList>
    </citation>
    <scope>NUCLEOTIDE SEQUENCE [LARGE SCALE GENOMIC DNA]</scope>
    <source>
        <strain>DS-1 / DSM 13023 / NCIMB 13966</strain>
    </source>
</reference>